<feature type="chain" id="PRO_0000446665" description="Dynamin-binding protein">
    <location>
        <begin position="1"/>
        <end position="1583"/>
    </location>
</feature>
<feature type="domain" description="SH3 1" evidence="6">
    <location>
        <begin position="2"/>
        <end position="61"/>
    </location>
</feature>
<feature type="domain" description="SH3 2" evidence="6">
    <location>
        <begin position="66"/>
        <end position="126"/>
    </location>
</feature>
<feature type="domain" description="SH3 3" evidence="6">
    <location>
        <begin position="145"/>
        <end position="204"/>
    </location>
</feature>
<feature type="domain" description="SH3 4" evidence="6">
    <location>
        <begin position="243"/>
        <end position="302"/>
    </location>
</feature>
<feature type="domain" description="DH" evidence="5">
    <location>
        <begin position="791"/>
        <end position="974"/>
    </location>
</feature>
<feature type="domain" description="BAR" evidence="7">
    <location>
        <begin position="1015"/>
        <end position="1224"/>
    </location>
</feature>
<feature type="domain" description="SH3 5" evidence="6">
    <location>
        <begin position="1292"/>
        <end position="1355"/>
    </location>
</feature>
<feature type="domain" description="SH3 6" evidence="6">
    <location>
        <begin position="1519"/>
        <end position="1582"/>
    </location>
</feature>
<feature type="region of interest" description="Disordered" evidence="8">
    <location>
        <begin position="217"/>
        <end position="244"/>
    </location>
</feature>
<feature type="region of interest" description="Disordered" evidence="8">
    <location>
        <begin position="306"/>
        <end position="329"/>
    </location>
</feature>
<feature type="region of interest" description="Disordered" evidence="8">
    <location>
        <begin position="366"/>
        <end position="464"/>
    </location>
</feature>
<feature type="region of interest" description="Disordered" evidence="8">
    <location>
        <begin position="594"/>
        <end position="656"/>
    </location>
</feature>
<feature type="region of interest" description="Disordered" evidence="8">
    <location>
        <begin position="671"/>
        <end position="693"/>
    </location>
</feature>
<feature type="region of interest" description="Disordered" evidence="8">
    <location>
        <begin position="1357"/>
        <end position="1496"/>
    </location>
</feature>
<feature type="coiled-coil region" evidence="4">
    <location>
        <begin position="742"/>
        <end position="762"/>
    </location>
</feature>
<feature type="compositionally biased region" description="Acidic residues" evidence="8">
    <location>
        <begin position="224"/>
        <end position="243"/>
    </location>
</feature>
<feature type="compositionally biased region" description="Basic and acidic residues" evidence="8">
    <location>
        <begin position="366"/>
        <end position="379"/>
    </location>
</feature>
<feature type="compositionally biased region" description="Polar residues" evidence="8">
    <location>
        <begin position="406"/>
        <end position="442"/>
    </location>
</feature>
<feature type="compositionally biased region" description="Pro residues" evidence="8">
    <location>
        <begin position="637"/>
        <end position="653"/>
    </location>
</feature>
<feature type="compositionally biased region" description="Basic and acidic residues" evidence="8">
    <location>
        <begin position="675"/>
        <end position="685"/>
    </location>
</feature>
<feature type="compositionally biased region" description="Low complexity" evidence="8">
    <location>
        <begin position="1361"/>
        <end position="1387"/>
    </location>
</feature>
<feature type="compositionally biased region" description="Polar residues" evidence="8">
    <location>
        <begin position="1388"/>
        <end position="1414"/>
    </location>
</feature>
<feature type="compositionally biased region" description="Low complexity" evidence="8">
    <location>
        <begin position="1433"/>
        <end position="1456"/>
    </location>
</feature>
<feature type="modified residue" description="N-acetylmethionine" evidence="3">
    <location>
        <position position="1"/>
    </location>
</feature>
<feature type="modified residue" description="Phosphoserine" evidence="3">
    <location>
        <position position="495"/>
    </location>
</feature>
<name>DNMBP_CANLF</name>
<comment type="function">
    <text evidence="2 3 9 10">Plays a critical role as a guanine nucleotide exchange factor (GEF) for CDC42 in several intracellular processes associated with the actin and microtubule cytoskeleton. Regulates the structure of apical junctions in epithelial cells (By similarity). Participates in the normal lumenogenesis of epithelial cell cysts by regulating spindle orientation (PubMed:20479467). Plays a key role in ciliogenesis and cyst formation (PubMed:26895965). May play a role in membrane trafficking between the cell surface and the Golgi (By similarity).</text>
</comment>
<comment type="subunit">
    <text evidence="2 3">Binds DNM1 via its N-terminal SH3 domains. The C-terminal SH3 domain binds a complex containing actin, tubulin, Hsp70 and actin-regulatory proteins, such as ENAH, EVL, WIRE, CR16, WAVE1 and NAP1L1 (By similarity). Interacts with FASLG. Interacts (via SH3 domain 6) with WASL. Interacts (via SH3 domain 6) interacts with ENAH. Interacts (via C-terminal domain) with TJP1; required for the apical cell-cell junction localization of DNMBP (By similarity).</text>
</comment>
<comment type="subcellular location">
    <subcellularLocation>
        <location evidence="3">Cytoplasm</location>
    </subcellularLocation>
    <subcellularLocation>
        <location evidence="2">Golgi apparatus</location>
        <location evidence="2">Golgi stack</location>
    </subcellularLocation>
    <subcellularLocation>
        <location evidence="2">Cytoplasm</location>
        <location evidence="2">Cytoskeleton</location>
    </subcellularLocation>
    <subcellularLocation>
        <location evidence="1">Synapse</location>
    </subcellularLocation>
    <subcellularLocation>
        <location evidence="3">Cell junction</location>
    </subcellularLocation>
    <text evidence="3">Localizes to the apical junction, colocalizes with TJP1.</text>
</comment>
<reference key="1">
    <citation type="journal article" date="2005" name="Nature">
        <title>Genome sequence, comparative analysis and haplotype structure of the domestic dog.</title>
        <authorList>
            <person name="Lindblad-Toh K."/>
            <person name="Wade C.M."/>
            <person name="Mikkelsen T.S."/>
            <person name="Karlsson E.K."/>
            <person name="Jaffe D.B."/>
            <person name="Kamal M."/>
            <person name="Clamp M."/>
            <person name="Chang J.L."/>
            <person name="Kulbokas E.J. III"/>
            <person name="Zody M.C."/>
            <person name="Mauceli E."/>
            <person name="Xie X."/>
            <person name="Breen M."/>
            <person name="Wayne R.K."/>
            <person name="Ostrander E.A."/>
            <person name="Ponting C.P."/>
            <person name="Galibert F."/>
            <person name="Smith D.R."/>
            <person name="deJong P.J."/>
            <person name="Kirkness E.F."/>
            <person name="Alvarez P."/>
            <person name="Biagi T."/>
            <person name="Brockman W."/>
            <person name="Butler J."/>
            <person name="Chin C.-W."/>
            <person name="Cook A."/>
            <person name="Cuff J."/>
            <person name="Daly M.J."/>
            <person name="DeCaprio D."/>
            <person name="Gnerre S."/>
            <person name="Grabherr M."/>
            <person name="Kellis M."/>
            <person name="Kleber M."/>
            <person name="Bardeleben C."/>
            <person name="Goodstadt L."/>
            <person name="Heger A."/>
            <person name="Hitte C."/>
            <person name="Kim L."/>
            <person name="Koepfli K.-P."/>
            <person name="Parker H.G."/>
            <person name="Pollinger J.P."/>
            <person name="Searle S.M.J."/>
            <person name="Sutter N.B."/>
            <person name="Thomas R."/>
            <person name="Webber C."/>
            <person name="Baldwin J."/>
            <person name="Abebe A."/>
            <person name="Abouelleil A."/>
            <person name="Aftuck L."/>
            <person name="Ait-Zahra M."/>
            <person name="Aldredge T."/>
            <person name="Allen N."/>
            <person name="An P."/>
            <person name="Anderson S."/>
            <person name="Antoine C."/>
            <person name="Arachchi H."/>
            <person name="Aslam A."/>
            <person name="Ayotte L."/>
            <person name="Bachantsang P."/>
            <person name="Barry A."/>
            <person name="Bayul T."/>
            <person name="Benamara M."/>
            <person name="Berlin A."/>
            <person name="Bessette D."/>
            <person name="Blitshteyn B."/>
            <person name="Bloom T."/>
            <person name="Blye J."/>
            <person name="Boguslavskiy L."/>
            <person name="Bonnet C."/>
            <person name="Boukhgalter B."/>
            <person name="Brown A."/>
            <person name="Cahill P."/>
            <person name="Calixte N."/>
            <person name="Camarata J."/>
            <person name="Cheshatsang Y."/>
            <person name="Chu J."/>
            <person name="Citroen M."/>
            <person name="Collymore A."/>
            <person name="Cooke P."/>
            <person name="Dawoe T."/>
            <person name="Daza R."/>
            <person name="Decktor K."/>
            <person name="DeGray S."/>
            <person name="Dhargay N."/>
            <person name="Dooley K."/>
            <person name="Dooley K."/>
            <person name="Dorje P."/>
            <person name="Dorjee K."/>
            <person name="Dorris L."/>
            <person name="Duffey N."/>
            <person name="Dupes A."/>
            <person name="Egbiremolen O."/>
            <person name="Elong R."/>
            <person name="Falk J."/>
            <person name="Farina A."/>
            <person name="Faro S."/>
            <person name="Ferguson D."/>
            <person name="Ferreira P."/>
            <person name="Fisher S."/>
            <person name="FitzGerald M."/>
            <person name="Foley K."/>
            <person name="Foley C."/>
            <person name="Franke A."/>
            <person name="Friedrich D."/>
            <person name="Gage D."/>
            <person name="Garber M."/>
            <person name="Gearin G."/>
            <person name="Giannoukos G."/>
            <person name="Goode T."/>
            <person name="Goyette A."/>
            <person name="Graham J."/>
            <person name="Grandbois E."/>
            <person name="Gyaltsen K."/>
            <person name="Hafez N."/>
            <person name="Hagopian D."/>
            <person name="Hagos B."/>
            <person name="Hall J."/>
            <person name="Healy C."/>
            <person name="Hegarty R."/>
            <person name="Honan T."/>
            <person name="Horn A."/>
            <person name="Houde N."/>
            <person name="Hughes L."/>
            <person name="Hunnicutt L."/>
            <person name="Husby M."/>
            <person name="Jester B."/>
            <person name="Jones C."/>
            <person name="Kamat A."/>
            <person name="Kanga B."/>
            <person name="Kells C."/>
            <person name="Khazanovich D."/>
            <person name="Kieu A.C."/>
            <person name="Kisner P."/>
            <person name="Kumar M."/>
            <person name="Lance K."/>
            <person name="Landers T."/>
            <person name="Lara M."/>
            <person name="Lee W."/>
            <person name="Leger J.-P."/>
            <person name="Lennon N."/>
            <person name="Leuper L."/>
            <person name="LeVine S."/>
            <person name="Liu J."/>
            <person name="Liu X."/>
            <person name="Lokyitsang Y."/>
            <person name="Lokyitsang T."/>
            <person name="Lui A."/>
            <person name="Macdonald J."/>
            <person name="Major J."/>
            <person name="Marabella R."/>
            <person name="Maru K."/>
            <person name="Matthews C."/>
            <person name="McDonough S."/>
            <person name="Mehta T."/>
            <person name="Meldrim J."/>
            <person name="Melnikov A."/>
            <person name="Meneus L."/>
            <person name="Mihalev A."/>
            <person name="Mihova T."/>
            <person name="Miller K."/>
            <person name="Mittelman R."/>
            <person name="Mlenga V."/>
            <person name="Mulrain L."/>
            <person name="Munson G."/>
            <person name="Navidi A."/>
            <person name="Naylor J."/>
            <person name="Nguyen T."/>
            <person name="Nguyen N."/>
            <person name="Nguyen C."/>
            <person name="Nguyen T."/>
            <person name="Nicol R."/>
            <person name="Norbu N."/>
            <person name="Norbu C."/>
            <person name="Novod N."/>
            <person name="Nyima T."/>
            <person name="Olandt P."/>
            <person name="O'Neill B."/>
            <person name="O'Neill K."/>
            <person name="Osman S."/>
            <person name="Oyono L."/>
            <person name="Patti C."/>
            <person name="Perrin D."/>
            <person name="Phunkhang P."/>
            <person name="Pierre F."/>
            <person name="Priest M."/>
            <person name="Rachupka A."/>
            <person name="Raghuraman S."/>
            <person name="Rameau R."/>
            <person name="Ray V."/>
            <person name="Raymond C."/>
            <person name="Rege F."/>
            <person name="Rise C."/>
            <person name="Rogers J."/>
            <person name="Rogov P."/>
            <person name="Sahalie J."/>
            <person name="Settipalli S."/>
            <person name="Sharpe T."/>
            <person name="Shea T."/>
            <person name="Sheehan M."/>
            <person name="Sherpa N."/>
            <person name="Shi J."/>
            <person name="Shih D."/>
            <person name="Sloan J."/>
            <person name="Smith C."/>
            <person name="Sparrow T."/>
            <person name="Stalker J."/>
            <person name="Stange-Thomann N."/>
            <person name="Stavropoulos S."/>
            <person name="Stone C."/>
            <person name="Stone S."/>
            <person name="Sykes S."/>
            <person name="Tchuinga P."/>
            <person name="Tenzing P."/>
            <person name="Tesfaye S."/>
            <person name="Thoulutsang D."/>
            <person name="Thoulutsang Y."/>
            <person name="Topham K."/>
            <person name="Topping I."/>
            <person name="Tsamla T."/>
            <person name="Vassiliev H."/>
            <person name="Venkataraman V."/>
            <person name="Vo A."/>
            <person name="Wangchuk T."/>
            <person name="Wangdi T."/>
            <person name="Weiand M."/>
            <person name="Wilkinson J."/>
            <person name="Wilson A."/>
            <person name="Yadav S."/>
            <person name="Yang S."/>
            <person name="Yang X."/>
            <person name="Young G."/>
            <person name="Yu Q."/>
            <person name="Zainoun J."/>
            <person name="Zembek L."/>
            <person name="Zimmer A."/>
            <person name="Lander E.S."/>
        </authorList>
    </citation>
    <scope>NUCLEOTIDE SEQUENCE [LARGE SCALE GENOMIC DNA]</scope>
    <source>
        <strain>Boxer</strain>
    </source>
</reference>
<reference key="2">
    <citation type="journal article" date="2010" name="J. Cell Biol.">
        <title>Tuba, a Cdc42 GEF, is required for polarized spindle orientation during epithelial cyst formation.</title>
        <authorList>
            <person name="Qin Y."/>
            <person name="Meisen W.H."/>
            <person name="Hao Y."/>
            <person name="Macara I.G."/>
        </authorList>
    </citation>
    <scope>FUNCTION</scope>
</reference>
<reference key="3">
    <citation type="journal article" date="2016" name="J. Biol. Chem.">
        <title>Dynamin binding protein (Tuba) deficiency inhibits ciliogenesis and nephrogenesis in vitro and in vivo.</title>
        <authorList>
            <person name="Baek J.I."/>
            <person name="Kwon S.H."/>
            <person name="Zuo X."/>
            <person name="Choi S.Y."/>
            <person name="Kim S.H."/>
            <person name="Lipschutz J.H."/>
        </authorList>
    </citation>
    <scope>FUNCTION</scope>
</reference>
<evidence type="ECO:0000250" key="1">
    <source>
        <dbReference type="UniProtKB" id="M0R4F8"/>
    </source>
</evidence>
<evidence type="ECO:0000250" key="2">
    <source>
        <dbReference type="UniProtKB" id="Q6TXD4"/>
    </source>
</evidence>
<evidence type="ECO:0000250" key="3">
    <source>
        <dbReference type="UniProtKB" id="Q6XZF7"/>
    </source>
</evidence>
<evidence type="ECO:0000255" key="4"/>
<evidence type="ECO:0000255" key="5">
    <source>
        <dbReference type="PROSITE-ProRule" id="PRU00062"/>
    </source>
</evidence>
<evidence type="ECO:0000255" key="6">
    <source>
        <dbReference type="PROSITE-ProRule" id="PRU00192"/>
    </source>
</evidence>
<evidence type="ECO:0000255" key="7">
    <source>
        <dbReference type="PROSITE-ProRule" id="PRU00361"/>
    </source>
</evidence>
<evidence type="ECO:0000256" key="8">
    <source>
        <dbReference type="SAM" id="MobiDB-lite"/>
    </source>
</evidence>
<evidence type="ECO:0000269" key="9">
    <source>
    </source>
</evidence>
<evidence type="ECO:0000269" key="10">
    <source>
    </source>
</evidence>
<evidence type="ECO:0000303" key="11">
    <source>
    </source>
</evidence>
<proteinExistence type="inferred from homology"/>
<accession>E2RP94</accession>
<keyword id="KW-0007">Acetylation</keyword>
<keyword id="KW-0965">Cell junction</keyword>
<keyword id="KW-0175">Coiled coil</keyword>
<keyword id="KW-0963">Cytoplasm</keyword>
<keyword id="KW-0206">Cytoskeleton</keyword>
<keyword id="KW-0333">Golgi apparatus</keyword>
<keyword id="KW-0344">Guanine-nucleotide releasing factor</keyword>
<keyword id="KW-0597">Phosphoprotein</keyword>
<keyword id="KW-1185">Reference proteome</keyword>
<keyword id="KW-0677">Repeat</keyword>
<keyword id="KW-0728">SH3 domain</keyword>
<keyword id="KW-0770">Synapse</keyword>
<protein>
    <recommendedName>
        <fullName evidence="3">Dynamin-binding protein</fullName>
    </recommendedName>
    <alternativeName>
        <fullName evidence="3">Scaffold protein Tuba</fullName>
    </alternativeName>
</protein>
<sequence length="1583" mass="178015">MEAGSVVRAIFDFCPSVSEELPLFVGDIIEVLAVVDEFWLLGKKEDVTGQFPSSFVEIVTIPSLKEGERLFVCISEFTSQELNSLPLHRGDLVILDDAPTASWLQGRSCWGARGFFPSSCVRELCLSSQSRRWHSQSALLQIPEYSMGQARALMGLSAQLDEELDFREGDVITIIGVPEPGWFEGELEGRRGIFPEGFVELLGPLRTVDELVSSGNHNDCIINGEEETPTGEEERGPEEDEEQPGTYGIALYRFQALEPNELDFEVGDKIRILGTLEDGWLEGSLKGRTGIFPYRFVKLFSKTRAEETMDLPKESSPTEIPDTSLDCRENPLVVEGRHKSPEYKAEKSNCVISETSASPLEHLTSECEVHKSSHQDEGTSRGPPRSPGWGHEQPLARHSPAEDPSETINGVSSQSQVPFRPRWQQNQYYSTTGRGHLSTEQYSDPLPLEAKAKDYSSRPPRGMYSPPKTFQKPVPSPHGSSCPLAPRVVRPSLLSSQLQSMVRGAKKYHTPKENASSFCSASERSEVKAGLQDRAFTADLIALGQGGGHTDLDSKLTQQLVEFEKSLSGPGAEPEAILRHFSIMNFNSEKDIVRGSSKSITPQELPERRRALRPPPPRPSTPASTSPHVLLDQNLKPEPPLAMRPSRPAPLPPSAQHRVTAVTPGLLTPGLFTHESCESPEKEGPENLDQTLDQTSQCPLVLVRIQEMEQDLDMCSPAPEEPNLTLEEKQDESLRAETPEDLEFYESNIESLNMELQQLREMTLLSSQSSSPVAPPGSMYTENPEQRMLEKRAKVIEELLQTERDYVRDLEMCIEHIMAPLQQTQIPNIDFEGLFGNMQMVIKVSKQLLADLEISDAVGPVFLDHRDELEGTYKVYCQNHDEAISLLEIYEKDEKIQKHLQDSLADLKSLYTEWGCTNYINLGSFLIKPVQRVMRYPLLLMELLNSTPESHPDKAPLTSAVLAVKEINVNINEYKRRKDLVLKYRKGDEDSLMEKISKLNIHSIIKKSNRVSSHLKHLTGFAPQIKDEAFEETEKNFRMQERLIKSFIRDLSLYLQHIRESACVKVVAAVSMWDVCMEKGHRDLEQFEKVHRYISDQLFTNFKERTERLVISPLNQLLSMFTGPHKLVQKRFDKLLDFYNCTERAEKLKDKKTLEELQSARNNYEALNAQLLDELPKFHQYAQGLFTNCIHGYAEAHCDFVRQALEQLKPLLSLLKVAGREGNLIAIFHEEHSRVLQQLQVFTFFPESLPAARKPFERKTLDRQSARKPLLGLPSYMLQSEELRASLLTRYPPEKLFQAERNFNAAQDLDVSLLEGDLVGVIKKKDPMGSQNRWLIDNGVSQGFVYSSFLKPYNTRRSHSDVSVGSHSSTESEQSSSSPRFPRQNSSGTLTFNPGSMAVSFTSGSCQKQPQDATSPKELGQEILSASSNLGCSESSPSRCPSDPDSSPQPRSWDSPEAARDISQPAPALRGYRNSRHPEIGGYSLPGRNGQGKDLTKGCARTTQALEDKNEEPESREAEGNQVYFAVYTFKARNPNELSVSANQRLKILEFKDVTGNTEWWLAEVNGKKGYVPSNYIRKAEYT</sequence>
<gene>
    <name evidence="3" type="primary">DNMBP</name>
    <name evidence="11" type="synonym">TUBA</name>
</gene>
<dbReference type="EMBL" id="AAEX03015466">
    <property type="status" value="NOT_ANNOTATED_CDS"/>
    <property type="molecule type" value="Genomic_DNA"/>
</dbReference>
<dbReference type="RefSeq" id="XP_534988.2">
    <property type="nucleotide sequence ID" value="XM_534988.4"/>
</dbReference>
<dbReference type="SMR" id="E2RP94"/>
<dbReference type="FunCoup" id="E2RP94">
    <property type="interactions" value="49"/>
</dbReference>
<dbReference type="STRING" id="9615.ENSCAFP00000044264"/>
<dbReference type="PaxDb" id="9612-ENSCAFP00000014051"/>
<dbReference type="eggNOG" id="KOG3519">
    <property type="taxonomic scope" value="Eukaryota"/>
</dbReference>
<dbReference type="eggNOG" id="KOG4225">
    <property type="taxonomic scope" value="Eukaryota"/>
</dbReference>
<dbReference type="HOGENOM" id="CLU_252350_0_0_1"/>
<dbReference type="InParanoid" id="E2RP94"/>
<dbReference type="OMA" id="FWGECNG"/>
<dbReference type="OrthoDB" id="27823at2759"/>
<dbReference type="TreeFam" id="TF330015"/>
<dbReference type="Proteomes" id="UP000002254">
    <property type="component" value="Chromosome 28"/>
</dbReference>
<dbReference type="Proteomes" id="UP000694429">
    <property type="component" value="Unplaced"/>
</dbReference>
<dbReference type="Proteomes" id="UP000694542">
    <property type="component" value="Unplaced"/>
</dbReference>
<dbReference type="Proteomes" id="UP000805418">
    <property type="component" value="Unplaced"/>
</dbReference>
<dbReference type="Bgee" id="ENSCAFG00000009561">
    <property type="expression patterns" value="Expressed in mucosa of urinary bladder and 47 other cell types or tissues"/>
</dbReference>
<dbReference type="GO" id="GO:0005911">
    <property type="term" value="C:cell-cell junction"/>
    <property type="evidence" value="ECO:0000250"/>
    <property type="project" value="UniProtKB"/>
</dbReference>
<dbReference type="GO" id="GO:0005737">
    <property type="term" value="C:cytoplasm"/>
    <property type="evidence" value="ECO:0000318"/>
    <property type="project" value="GO_Central"/>
</dbReference>
<dbReference type="GO" id="GO:0005856">
    <property type="term" value="C:cytoskeleton"/>
    <property type="evidence" value="ECO:0007669"/>
    <property type="project" value="UniProtKB-SubCell"/>
</dbReference>
<dbReference type="GO" id="GO:0005794">
    <property type="term" value="C:Golgi apparatus"/>
    <property type="evidence" value="ECO:0000250"/>
    <property type="project" value="UniProtKB"/>
</dbReference>
<dbReference type="GO" id="GO:0005795">
    <property type="term" value="C:Golgi stack"/>
    <property type="evidence" value="ECO:0007669"/>
    <property type="project" value="UniProtKB-SubCell"/>
</dbReference>
<dbReference type="GO" id="GO:0098793">
    <property type="term" value="C:presynapse"/>
    <property type="evidence" value="ECO:0000250"/>
    <property type="project" value="UniProtKB"/>
</dbReference>
<dbReference type="GO" id="GO:0045202">
    <property type="term" value="C:synapse"/>
    <property type="evidence" value="ECO:0000250"/>
    <property type="project" value="UniProtKB"/>
</dbReference>
<dbReference type="GO" id="GO:0005085">
    <property type="term" value="F:guanyl-nucleotide exchange factor activity"/>
    <property type="evidence" value="ECO:0000250"/>
    <property type="project" value="UniProtKB"/>
</dbReference>
<dbReference type="GO" id="GO:0060271">
    <property type="term" value="P:cilium assembly"/>
    <property type="evidence" value="ECO:0000315"/>
    <property type="project" value="UniProtKB"/>
</dbReference>
<dbReference type="GO" id="GO:0035556">
    <property type="term" value="P:intracellular signal transduction"/>
    <property type="evidence" value="ECO:0007669"/>
    <property type="project" value="InterPro"/>
</dbReference>
<dbReference type="GO" id="GO:0008360">
    <property type="term" value="P:regulation of cell shape"/>
    <property type="evidence" value="ECO:0000250"/>
    <property type="project" value="UniProtKB"/>
</dbReference>
<dbReference type="CDD" id="cd07589">
    <property type="entry name" value="BAR_DNMBP"/>
    <property type="match status" value="1"/>
</dbReference>
<dbReference type="CDD" id="cd00160">
    <property type="entry name" value="RhoGEF"/>
    <property type="match status" value="1"/>
</dbReference>
<dbReference type="CDD" id="cd11798">
    <property type="entry name" value="SH3_DNMBP_C1"/>
    <property type="match status" value="1"/>
</dbReference>
<dbReference type="CDD" id="cd12141">
    <property type="entry name" value="SH3_DNMBP_C2"/>
    <property type="match status" value="1"/>
</dbReference>
<dbReference type="CDD" id="cd11794">
    <property type="entry name" value="SH3_DNMBP_N1"/>
    <property type="match status" value="1"/>
</dbReference>
<dbReference type="CDD" id="cd11795">
    <property type="entry name" value="SH3_DNMBP_N2"/>
    <property type="match status" value="1"/>
</dbReference>
<dbReference type="CDD" id="cd11796">
    <property type="entry name" value="SH3_DNMBP_N3"/>
    <property type="match status" value="1"/>
</dbReference>
<dbReference type="FunFam" id="1.20.1270.60:FF:000027">
    <property type="entry name" value="dynamin-binding protein isoform X1"/>
    <property type="match status" value="1"/>
</dbReference>
<dbReference type="FunFam" id="2.30.30.40:FF:000066">
    <property type="entry name" value="dynamin-binding protein isoform X1"/>
    <property type="match status" value="1"/>
</dbReference>
<dbReference type="FunFam" id="2.30.30.40:FF:000084">
    <property type="entry name" value="dynamin-binding protein isoform X1"/>
    <property type="match status" value="1"/>
</dbReference>
<dbReference type="FunFam" id="2.30.30.40:FF:000120">
    <property type="entry name" value="dynamin-binding protein isoform X1"/>
    <property type="match status" value="1"/>
</dbReference>
<dbReference type="FunFam" id="2.30.30.40:FF:000138">
    <property type="entry name" value="dynamin-binding protein isoform X1"/>
    <property type="match status" value="1"/>
</dbReference>
<dbReference type="FunFam" id="2.30.30.40:FF:000160">
    <property type="entry name" value="dynamin-binding protein isoform X1"/>
    <property type="match status" value="1"/>
</dbReference>
<dbReference type="FunFam" id="2.30.30.40:FF:000165">
    <property type="entry name" value="dynamin-binding protein isoform X1"/>
    <property type="match status" value="1"/>
</dbReference>
<dbReference type="FunFam" id="1.20.900.10:FF:000023">
    <property type="entry name" value="dynamin-binding protein isoform X2"/>
    <property type="match status" value="1"/>
</dbReference>
<dbReference type="Gene3D" id="1.20.1270.60">
    <property type="entry name" value="Arfaptin homology (AH) domain/BAR domain"/>
    <property type="match status" value="1"/>
</dbReference>
<dbReference type="Gene3D" id="1.20.900.10">
    <property type="entry name" value="Dbl homology (DH) domain"/>
    <property type="match status" value="1"/>
</dbReference>
<dbReference type="Gene3D" id="2.30.30.40">
    <property type="entry name" value="SH3 Domains"/>
    <property type="match status" value="6"/>
</dbReference>
<dbReference type="InterPro" id="IPR027267">
    <property type="entry name" value="AH/BAR_dom_sf"/>
</dbReference>
<dbReference type="InterPro" id="IPR004148">
    <property type="entry name" value="BAR_dom"/>
</dbReference>
<dbReference type="InterPro" id="IPR035899">
    <property type="entry name" value="DBL_dom_sf"/>
</dbReference>
<dbReference type="InterPro" id="IPR000219">
    <property type="entry name" value="DH_dom"/>
</dbReference>
<dbReference type="InterPro" id="IPR035820">
    <property type="entry name" value="DNMBP_SH3_C1"/>
</dbReference>
<dbReference type="InterPro" id="IPR035817">
    <property type="entry name" value="DNMBP_SH3_N1"/>
</dbReference>
<dbReference type="InterPro" id="IPR035818">
    <property type="entry name" value="DNMBP_SH3_N2"/>
</dbReference>
<dbReference type="InterPro" id="IPR035819">
    <property type="entry name" value="DNMBP_SH3_N3"/>
</dbReference>
<dbReference type="InterPro" id="IPR051492">
    <property type="entry name" value="Dynamin-Rho_GEF"/>
</dbReference>
<dbReference type="InterPro" id="IPR001331">
    <property type="entry name" value="GDS_CDC24_CS"/>
</dbReference>
<dbReference type="InterPro" id="IPR036028">
    <property type="entry name" value="SH3-like_dom_sf"/>
</dbReference>
<dbReference type="InterPro" id="IPR001452">
    <property type="entry name" value="SH3_domain"/>
</dbReference>
<dbReference type="PANTHER" id="PTHR22834:SF19">
    <property type="entry name" value="DYNAMIN-BINDING PROTEIN"/>
    <property type="match status" value="1"/>
</dbReference>
<dbReference type="PANTHER" id="PTHR22834">
    <property type="entry name" value="NUCLEAR FUSION PROTEIN FUS2"/>
    <property type="match status" value="1"/>
</dbReference>
<dbReference type="Pfam" id="PF03114">
    <property type="entry name" value="BAR"/>
    <property type="match status" value="1"/>
</dbReference>
<dbReference type="Pfam" id="PF00621">
    <property type="entry name" value="RhoGEF"/>
    <property type="match status" value="1"/>
</dbReference>
<dbReference type="Pfam" id="PF00018">
    <property type="entry name" value="SH3_1"/>
    <property type="match status" value="1"/>
</dbReference>
<dbReference type="Pfam" id="PF07653">
    <property type="entry name" value="SH3_2"/>
    <property type="match status" value="1"/>
</dbReference>
<dbReference type="Pfam" id="PF14604">
    <property type="entry name" value="SH3_9"/>
    <property type="match status" value="2"/>
</dbReference>
<dbReference type="PRINTS" id="PR00499">
    <property type="entry name" value="P67PHOX"/>
</dbReference>
<dbReference type="SMART" id="SM00721">
    <property type="entry name" value="BAR"/>
    <property type="match status" value="1"/>
</dbReference>
<dbReference type="SMART" id="SM00325">
    <property type="entry name" value="RhoGEF"/>
    <property type="match status" value="1"/>
</dbReference>
<dbReference type="SMART" id="SM00326">
    <property type="entry name" value="SH3"/>
    <property type="match status" value="6"/>
</dbReference>
<dbReference type="SUPFAM" id="SSF103657">
    <property type="entry name" value="BAR/IMD domain-like"/>
    <property type="match status" value="1"/>
</dbReference>
<dbReference type="SUPFAM" id="SSF48065">
    <property type="entry name" value="DBL homology domain (DH-domain)"/>
    <property type="match status" value="1"/>
</dbReference>
<dbReference type="SUPFAM" id="SSF50044">
    <property type="entry name" value="SH3-domain"/>
    <property type="match status" value="6"/>
</dbReference>
<dbReference type="PROSITE" id="PS51021">
    <property type="entry name" value="BAR"/>
    <property type="match status" value="1"/>
</dbReference>
<dbReference type="PROSITE" id="PS00741">
    <property type="entry name" value="DH_1"/>
    <property type="match status" value="1"/>
</dbReference>
<dbReference type="PROSITE" id="PS50010">
    <property type="entry name" value="DH_2"/>
    <property type="match status" value="1"/>
</dbReference>
<dbReference type="PROSITE" id="PS50002">
    <property type="entry name" value="SH3"/>
    <property type="match status" value="6"/>
</dbReference>
<organism>
    <name type="scientific">Canis lupus familiaris</name>
    <name type="common">Dog</name>
    <name type="synonym">Canis familiaris</name>
    <dbReference type="NCBI Taxonomy" id="9615"/>
    <lineage>
        <taxon>Eukaryota</taxon>
        <taxon>Metazoa</taxon>
        <taxon>Chordata</taxon>
        <taxon>Craniata</taxon>
        <taxon>Vertebrata</taxon>
        <taxon>Euteleostomi</taxon>
        <taxon>Mammalia</taxon>
        <taxon>Eutheria</taxon>
        <taxon>Laurasiatheria</taxon>
        <taxon>Carnivora</taxon>
        <taxon>Caniformia</taxon>
        <taxon>Canidae</taxon>
        <taxon>Canis</taxon>
    </lineage>
</organism>